<gene>
    <name evidence="1" type="primary">fabA</name>
    <name type="ordered locus">Sbal_2565</name>
</gene>
<organism>
    <name type="scientific">Shewanella baltica (strain OS155 / ATCC BAA-1091)</name>
    <dbReference type="NCBI Taxonomy" id="325240"/>
    <lineage>
        <taxon>Bacteria</taxon>
        <taxon>Pseudomonadati</taxon>
        <taxon>Pseudomonadota</taxon>
        <taxon>Gammaproteobacteria</taxon>
        <taxon>Alteromonadales</taxon>
        <taxon>Shewanellaceae</taxon>
        <taxon>Shewanella</taxon>
    </lineage>
</organism>
<proteinExistence type="inferred from homology"/>
<sequence length="171" mass="18784">MNKANSFNKEELIACGHGKLFGPNSPRLPVDNMLMMDRIVTINDNGGEFGKGEIVAELDINPDLWFFDCHFITDPVMPGCLGLDAMWQLVGFYLGWEGAEGKGRALGVGEVKFTGQVLPGAKKVTYKLNIKRTIHRKLVMGIADAILEVDGRQIYSATDLKVGVFSDTSTF</sequence>
<dbReference type="EC" id="4.2.1.59" evidence="1"/>
<dbReference type="EC" id="5.3.3.14" evidence="1"/>
<dbReference type="EMBL" id="CP000563">
    <property type="protein sequence ID" value="ABN62058.1"/>
    <property type="molecule type" value="Genomic_DNA"/>
</dbReference>
<dbReference type="RefSeq" id="WP_006082073.1">
    <property type="nucleotide sequence ID" value="NC_009052.1"/>
</dbReference>
<dbReference type="SMR" id="A3D5P5"/>
<dbReference type="STRING" id="325240.Sbal_2565"/>
<dbReference type="GeneID" id="11772774"/>
<dbReference type="KEGG" id="sbl:Sbal_2565"/>
<dbReference type="HOGENOM" id="CLU_097925_0_0_6"/>
<dbReference type="OrthoDB" id="9786735at2"/>
<dbReference type="UniPathway" id="UPA00094"/>
<dbReference type="Proteomes" id="UP000001557">
    <property type="component" value="Chromosome"/>
</dbReference>
<dbReference type="GO" id="GO:0005737">
    <property type="term" value="C:cytoplasm"/>
    <property type="evidence" value="ECO:0007669"/>
    <property type="project" value="UniProtKB-SubCell"/>
</dbReference>
<dbReference type="GO" id="GO:0019171">
    <property type="term" value="F:(3R)-hydroxyacyl-[acyl-carrier-protein] dehydratase activity"/>
    <property type="evidence" value="ECO:0007669"/>
    <property type="project" value="UniProtKB-UniRule"/>
</dbReference>
<dbReference type="GO" id="GO:0034017">
    <property type="term" value="F:trans-2-decenoyl-acyl-carrier-protein isomerase activity"/>
    <property type="evidence" value="ECO:0007669"/>
    <property type="project" value="UniProtKB-UniRule"/>
</dbReference>
<dbReference type="GO" id="GO:0006636">
    <property type="term" value="P:unsaturated fatty acid biosynthetic process"/>
    <property type="evidence" value="ECO:0007669"/>
    <property type="project" value="UniProtKB-UniRule"/>
</dbReference>
<dbReference type="CDD" id="cd01287">
    <property type="entry name" value="FabA"/>
    <property type="match status" value="1"/>
</dbReference>
<dbReference type="Gene3D" id="3.10.129.10">
    <property type="entry name" value="Hotdog Thioesterase"/>
    <property type="match status" value="1"/>
</dbReference>
<dbReference type="HAMAP" id="MF_00405">
    <property type="entry name" value="FabA"/>
    <property type="match status" value="1"/>
</dbReference>
<dbReference type="InterPro" id="IPR010083">
    <property type="entry name" value="FabA"/>
</dbReference>
<dbReference type="InterPro" id="IPR013114">
    <property type="entry name" value="FabA_FabZ"/>
</dbReference>
<dbReference type="InterPro" id="IPR029069">
    <property type="entry name" value="HotDog_dom_sf"/>
</dbReference>
<dbReference type="NCBIfam" id="TIGR01749">
    <property type="entry name" value="fabA"/>
    <property type="match status" value="1"/>
</dbReference>
<dbReference type="NCBIfam" id="NF003509">
    <property type="entry name" value="PRK05174.1"/>
    <property type="match status" value="1"/>
</dbReference>
<dbReference type="PANTHER" id="PTHR30272">
    <property type="entry name" value="3-HYDROXYACYL-[ACYL-CARRIER-PROTEIN] DEHYDRATASE"/>
    <property type="match status" value="1"/>
</dbReference>
<dbReference type="PANTHER" id="PTHR30272:SF8">
    <property type="entry name" value="3-HYDROXYDECANOYL-[ACYL-CARRIER-PROTEIN] DEHYDRATASE"/>
    <property type="match status" value="1"/>
</dbReference>
<dbReference type="Pfam" id="PF07977">
    <property type="entry name" value="FabA"/>
    <property type="match status" value="1"/>
</dbReference>
<dbReference type="SUPFAM" id="SSF54637">
    <property type="entry name" value="Thioesterase/thiol ester dehydrase-isomerase"/>
    <property type="match status" value="1"/>
</dbReference>
<comment type="function">
    <text evidence="1">Necessary for the introduction of cis unsaturation into fatty acids. Catalyzes the dehydration of (3R)-3-hydroxydecanoyl-ACP to E-(2)-decenoyl-ACP and then its isomerization to Z-(3)-decenoyl-ACP. Can catalyze the dehydratase reaction for beta-hydroxyacyl-ACPs with saturated chain lengths up to 16:0, being most active on intermediate chain length.</text>
</comment>
<comment type="catalytic activity">
    <reaction evidence="1">
        <text>a (3R)-hydroxyacyl-[ACP] = a (2E)-enoyl-[ACP] + H2O</text>
        <dbReference type="Rhea" id="RHEA:13097"/>
        <dbReference type="Rhea" id="RHEA-COMP:9925"/>
        <dbReference type="Rhea" id="RHEA-COMP:9945"/>
        <dbReference type="ChEBI" id="CHEBI:15377"/>
        <dbReference type="ChEBI" id="CHEBI:78784"/>
        <dbReference type="ChEBI" id="CHEBI:78827"/>
        <dbReference type="EC" id="4.2.1.59"/>
    </reaction>
</comment>
<comment type="catalytic activity">
    <reaction evidence="1">
        <text>(3R)-hydroxydecanoyl-[ACP] = (2E)-decenoyl-[ACP] + H2O</text>
        <dbReference type="Rhea" id="RHEA:41860"/>
        <dbReference type="Rhea" id="RHEA-COMP:9638"/>
        <dbReference type="Rhea" id="RHEA-COMP:9639"/>
        <dbReference type="ChEBI" id="CHEBI:15377"/>
        <dbReference type="ChEBI" id="CHEBI:78466"/>
        <dbReference type="ChEBI" id="CHEBI:78467"/>
    </reaction>
</comment>
<comment type="catalytic activity">
    <reaction evidence="1">
        <text>(2E)-decenoyl-[ACP] = (3Z)-decenoyl-[ACP]</text>
        <dbReference type="Rhea" id="RHEA:23568"/>
        <dbReference type="Rhea" id="RHEA-COMP:9639"/>
        <dbReference type="Rhea" id="RHEA-COMP:9927"/>
        <dbReference type="ChEBI" id="CHEBI:78467"/>
        <dbReference type="ChEBI" id="CHEBI:78798"/>
        <dbReference type="EC" id="5.3.3.14"/>
    </reaction>
</comment>
<comment type="pathway">
    <text evidence="1">Lipid metabolism; fatty acid biosynthesis.</text>
</comment>
<comment type="subunit">
    <text evidence="1">Homodimer.</text>
</comment>
<comment type="subcellular location">
    <subcellularLocation>
        <location evidence="1">Cytoplasm</location>
    </subcellularLocation>
</comment>
<comment type="similarity">
    <text evidence="1">Belongs to the thioester dehydratase family. FabA subfamily.</text>
</comment>
<protein>
    <recommendedName>
        <fullName evidence="1">3-hydroxydecanoyl-[acyl-carrier-protein] dehydratase</fullName>
        <ecNumber evidence="1">4.2.1.59</ecNumber>
    </recommendedName>
    <alternativeName>
        <fullName evidence="1">3-hydroxyacyl-[acyl-carrier-protein] dehydratase FabA</fullName>
    </alternativeName>
    <alternativeName>
        <fullName evidence="1">Beta-hydroxydecanoyl thioester dehydrase</fullName>
    </alternativeName>
    <alternativeName>
        <fullName evidence="1">Trans-2-decenoyl-[acyl-carrier-protein] isomerase</fullName>
        <ecNumber evidence="1">5.3.3.14</ecNumber>
    </alternativeName>
</protein>
<name>FABA_SHEB5</name>
<reference key="1">
    <citation type="submission" date="2007-02" db="EMBL/GenBank/DDBJ databases">
        <title>Complete sequence of chromosome of Shewanella baltica OS155.</title>
        <authorList>
            <consortium name="US DOE Joint Genome Institute"/>
            <person name="Copeland A."/>
            <person name="Lucas S."/>
            <person name="Lapidus A."/>
            <person name="Barry K."/>
            <person name="Detter J.C."/>
            <person name="Glavina del Rio T."/>
            <person name="Hammon N."/>
            <person name="Israni S."/>
            <person name="Dalin E."/>
            <person name="Tice H."/>
            <person name="Pitluck S."/>
            <person name="Sims D.R."/>
            <person name="Brettin T."/>
            <person name="Bruce D."/>
            <person name="Han C."/>
            <person name="Tapia R."/>
            <person name="Brainard J."/>
            <person name="Schmutz J."/>
            <person name="Larimer F."/>
            <person name="Land M."/>
            <person name="Hauser L."/>
            <person name="Kyrpides N."/>
            <person name="Mikhailova N."/>
            <person name="Brettar I."/>
            <person name="Klappenbach J."/>
            <person name="Konstantinidis K."/>
            <person name="Rodrigues J."/>
            <person name="Tiedje J."/>
            <person name="Richardson P."/>
        </authorList>
    </citation>
    <scope>NUCLEOTIDE SEQUENCE [LARGE SCALE GENOMIC DNA]</scope>
    <source>
        <strain>OS155 / ATCC BAA-1091</strain>
    </source>
</reference>
<keyword id="KW-0963">Cytoplasm</keyword>
<keyword id="KW-0275">Fatty acid biosynthesis</keyword>
<keyword id="KW-0276">Fatty acid metabolism</keyword>
<keyword id="KW-0413">Isomerase</keyword>
<keyword id="KW-0444">Lipid biosynthesis</keyword>
<keyword id="KW-0443">Lipid metabolism</keyword>
<keyword id="KW-0456">Lyase</keyword>
<keyword id="KW-1185">Reference proteome</keyword>
<feature type="chain" id="PRO_1000201208" description="3-hydroxydecanoyl-[acyl-carrier-protein] dehydratase">
    <location>
        <begin position="1"/>
        <end position="171"/>
    </location>
</feature>
<feature type="active site" evidence="1">
    <location>
        <position position="70"/>
    </location>
</feature>
<evidence type="ECO:0000255" key="1">
    <source>
        <dbReference type="HAMAP-Rule" id="MF_00405"/>
    </source>
</evidence>
<accession>A3D5P5</accession>